<reference key="1">
    <citation type="journal article" date="1995" name="J. Cell Biol.">
        <title>A talin homologue of Dictyostelium rapidly assembles at the leading edge of cells in response to chemoattractant.</title>
        <authorList>
            <person name="Kreitmeier M."/>
            <person name="Gerisch G."/>
            <person name="Heizer C."/>
            <person name="Mueller-Taubenberger A."/>
        </authorList>
    </citation>
    <scope>NUCLEOTIDE SEQUENCE [GENOMIC DNA]</scope>
    <scope>FUNCTION</scope>
    <scope>SUBCELLULAR LOCATION</scope>
    <source>
        <strain>AX2</strain>
    </source>
</reference>
<reference key="2">
    <citation type="submission" date="1999-12" db="EMBL/GenBank/DDBJ databases">
        <authorList>
            <person name="Mueller-Taubenberger A."/>
        </authorList>
    </citation>
    <scope>SEQUENCE REVISION TO 2076; 2080; 2186 AND 2230</scope>
</reference>
<reference key="3">
    <citation type="journal article" date="2006" name="Eur. J. Cell Biol.">
        <title>Identification and isolation of Dictyostelium microtubule-associated protein interactors by tandem affinity purification.</title>
        <authorList>
            <person name="Koch K.V."/>
            <person name="Reinders Y."/>
            <person name="Ho T.-H."/>
            <person name="Sickmann A."/>
            <person name="Graef R."/>
        </authorList>
    </citation>
    <scope>IDENTIFICATION BY MASS SPECTROMETRY [LARGE SCALE ANALYSIS]</scope>
    <source>
        <strain>AX2</strain>
    </source>
</reference>
<organism>
    <name type="scientific">Dictyostelium discoideum</name>
    <name type="common">Social amoeba</name>
    <dbReference type="NCBI Taxonomy" id="44689"/>
    <lineage>
        <taxon>Eukaryota</taxon>
        <taxon>Amoebozoa</taxon>
        <taxon>Evosea</taxon>
        <taxon>Eumycetozoa</taxon>
        <taxon>Dictyostelia</taxon>
        <taxon>Dictyosteliales</taxon>
        <taxon>Dictyosteliaceae</taxon>
        <taxon>Dictyostelium</taxon>
    </lineage>
</organism>
<protein>
    <recommendedName>
        <fullName>Talin-A</fullName>
    </recommendedName>
    <alternativeName>
        <fullName>Filopodin</fullName>
    </alternativeName>
</protein>
<name>TALA1_DICDI</name>
<evidence type="ECO:0000255" key="1">
    <source>
        <dbReference type="PROSITE-ProRule" id="PRU00084"/>
    </source>
</evidence>
<evidence type="ECO:0000255" key="2">
    <source>
        <dbReference type="PROSITE-ProRule" id="PRU00292"/>
    </source>
</evidence>
<evidence type="ECO:0000269" key="3">
    <source>
    </source>
</evidence>
<evidence type="ECO:0000305" key="4"/>
<proteinExistence type="evidence at protein level"/>
<comment type="function">
    <text evidence="3">Actin-binding protein that may be involved in the control of cell motility and chemotaxis.</text>
</comment>
<comment type="subcellular location">
    <subcellularLocation>
        <location evidence="3">Cytoplasm</location>
        <location evidence="3">Cytoskeleton</location>
    </subcellularLocation>
    <subcellularLocation>
        <location evidence="3">Cytoplasm</location>
        <location evidence="3">Cell cortex</location>
    </subcellularLocation>
    <text>Rapidly assembles at the leading edge of cells in response to chemoattractant.</text>
</comment>
<comment type="caution">
    <text evidence="4">This is a full-length TALA gene product. Strain AX2 produces a full length protein. Strain AX4 has a stop codon in position 1280 which disrupts the TALA gene and produces a truncated protein (AC P0CE94).</text>
</comment>
<keyword id="KW-0009">Actin-binding</keyword>
<keyword id="KW-0963">Cytoplasm</keyword>
<keyword id="KW-0206">Cytoskeleton</keyword>
<sequence length="2492" mass="268851">MSISLKINIVGANTVKTLRFAPDMCIQECCTHIFEKTNEGGPDHGLYQAHIEGKQSARWLAMEKTLQFYDINSDQQLDYKKKHRPQKFKLLDGTIKTQLVDESQNVSEIVNSICKKMGIKNPEEYSLMNSAGAWLNNTQILSEQGISENDITVLMKKFFFNDANIDRNDPVQLHLLFVQCRDGIIEGKYPTQREESLALSALQCQVQLGDYNPTKHEPGFLTLKDYLPLQWLKSKGVEKDIFKEHKKLVSMTEVNAKYRYVQLCRSLKTYGMTSFDVKIREYGKKKMVDHILGITREQMLLMLTETKEVIMTHPLKHIKRWAATDKSFTLDFGDHETEYLILQTPNPEQISQLIGGYIEIIMKARKDSSKVIEKEDTAMGVEEVMAVKKGSVANSSSYMGYGAGGGGANQLQPSQQIPITDLKSALRATDLLIGELGGFRSSTGATPQNFTRSFTTLTPQQFKHQLISHTNAMAIAAQGLFQDMTTPPPTGGIAAFQQAITKRAQIIMAELNTVGTAAKNAGYFPDMASFSDEIIGVATKLSESMARLLAIGSTIQGTDCDEKSQKAAQTEIFNVQSLVTLMMAACDNEYVTDSSSKLLIECAKNVSAAIADMLVVGNSKVEFIDDELLLGQIQNTLKSTSLTSDELLSTTENLASTSCHPESRKQITNITQSALNQSNALLTAFKSGEIPEQDYNLLNARVSDIIESVNLINYAMDCSEREYKISITSNGVEVGEGEILAGTNLTEEFATVANDLTNAIMTMRSNLKNPDTVMESYKMVAGHANRLITCTKAVASRADTQSQQRLFNSTNAVFESVANLSNHCRSYIKNPEQEAHTFQIVETAGHLQFLTQNMSTDAGKIACITSLRDYSKEMIAQVSSLISTSRTSSQYLPDANGITLLKGAKDVSDALSKLMVGIKKVVLDPKSEATQMELLTLAQKQSLPPMNLVSTCKRFAPKISDPNQKQRLIFSSDAAAQSVQKLMKAGEAYKRICGHIEIEEALEVFDSTIADLETTEIAIAGGFLDAVSGTTREGAAELLMVAIKDLNKVNNELVTDIRVNPARLGDLVKSATESASSVAISAKTLICATTGKQVQTKLMGITKQLMIDMEQLIRASRSVRSNPNDRRSELLLDRRSNDVSISTAALVGSTANVDCKELDEASADISNLLSLKMGSLESILSQPTEEFAFYVEEIASSTKALNAASQQVVAMARNKNLKGLGASAKITASALSTLVSHAQNAIVLTENEATKNAILASTVALGGQIIGLLDFSKARIANYKDPIYDQNLINQAKSVEDHLVKVGRSLGGDGNNTICDEAVDRIIEATRSLDKTILPDTSGLQTNAHLEMLHQQSLLAITQASKKLGSITSNLVNSKNNSDLVGSGSTDAERIIEMIEAAKHVVHCSISTYNPDILLPAKSILDASQMLTANQADVNHVLSHAATIAACTQQLLGITRERASQFNEQDEQQVQVRDGIVKSTQQLAHATSSLARAVKSVTSKEPGAKAMISQSLKDLESAINNLLITSSVPASERGIGIADFNKLMSTCRSVSTASSQLIISASSCSQKPKDIELSSILSENAVLMTNSLKDIIKVTSSMMPGVNFCEEAIEIAQRAISDLSSVALSVAVGSFDSSANNKEGLSHVESQERLVDVTKKIGTGINDLLKASRQSPEAIGISAKALSFIAPSLVNTTKPALATAPDADAQNDLVTESKNVGDSILKLCQASLIASSNPSKETYQIIVNKCVDASEAMSKLVAQISSGVNLYKELDESLDRIRKSVVQTSAKDAPKDSENRGYQEYKEELSNLTKNLALSLKTIVATDGNNLVSISTISKDIANYISDIAHVSSAILATTSDQKIRDSIITSSRQVIVSTGDIVNHIKVNSTDKANSSQAKVNDSYRATNDNITRFLQSLKQGAIGEILSDAAIDQIRKVISDLDGYSLFAAAGQLENDQSSQSTMNEVTKQQHLKNLQKDTITQAKLLIVSSSQLVGSSRGTQEHLGSATTKVANTVSSLVKTAKDIASVLADTTSQQDILSASKALSISSQQMVLATKDAQRFKKDATAFRSLGKSAEAVAEAVGQFLTSVYTAISDAGKGIKELEKSIVQVANYHEKPDTVLSNKDATAEIFAQSARDLAKSSIEIVTSYTSSQDSLVKSSQAVVSNVQSFISNSKGVIALLGNGNDDLKSKVLENVKQTTGDMLALLQCVKDQDKNGSTSIADATRSISDRVHSVVTLSKSLPGGQNIVVEEDNVLEDLEALAEDELSACARSIEEATAKLIAARPQSKSKNGKLDAEGVAATIVDASSAIAKAVAKLVNSAAVAQSKRREDQIASGSVYKADPTWSNGLISAAKGVGAATHRLVEAAMKSATGKAEEEELIATARSVAAATALLVSASRAKSGDDYQSQAAHSHLSTAARQVASATSDLVAAAKAATIFDEQQQEEEQEQFNFTGSKVKELEQQMKILKLEKELETARRQMLNSRKQNYNKN</sequence>
<dbReference type="EMBL" id="U14576">
    <property type="protein sequence ID" value="AAC46586.2"/>
    <property type="molecule type" value="Genomic_DNA"/>
</dbReference>
<dbReference type="PIR" id="A57036">
    <property type="entry name" value="A57036"/>
</dbReference>
<dbReference type="SMR" id="P0CE95"/>
<dbReference type="PaxDb" id="44689-DDB0233802"/>
<dbReference type="ABCD" id="P0CE95">
    <property type="antibodies" value="2 sequenced antibodies"/>
</dbReference>
<dbReference type="VEuPathDB" id="AmoebaDB:DDB_G0290481"/>
<dbReference type="eggNOG" id="KOG4261">
    <property type="taxonomic scope" value="Eukaryota"/>
</dbReference>
<dbReference type="GO" id="GO:0005938">
    <property type="term" value="C:cell cortex"/>
    <property type="evidence" value="ECO:0007669"/>
    <property type="project" value="UniProtKB-SubCell"/>
</dbReference>
<dbReference type="GO" id="GO:0005856">
    <property type="term" value="C:cytoskeleton"/>
    <property type="evidence" value="ECO:0007669"/>
    <property type="project" value="UniProtKB-SubCell"/>
</dbReference>
<dbReference type="GO" id="GO:0051015">
    <property type="term" value="F:actin filament binding"/>
    <property type="evidence" value="ECO:0007669"/>
    <property type="project" value="InterPro"/>
</dbReference>
<dbReference type="GO" id="GO:0000916">
    <property type="term" value="P:actomyosin contractile ring contraction"/>
    <property type="evidence" value="ECO:0000315"/>
    <property type="project" value="CACAO"/>
</dbReference>
<dbReference type="GO" id="GO:0007155">
    <property type="term" value="P:cell adhesion"/>
    <property type="evidence" value="ECO:0007669"/>
    <property type="project" value="InterPro"/>
</dbReference>
<dbReference type="CDD" id="cd14473">
    <property type="entry name" value="FERM_B-lobe"/>
    <property type="match status" value="1"/>
</dbReference>
<dbReference type="CDD" id="cd10569">
    <property type="entry name" value="FERM_C_Talin"/>
    <property type="match status" value="1"/>
</dbReference>
<dbReference type="CDD" id="cd17089">
    <property type="entry name" value="FERM_F0_TLN"/>
    <property type="match status" value="1"/>
</dbReference>
<dbReference type="CDD" id="cd17090">
    <property type="entry name" value="FERM_F1_TLN"/>
    <property type="match status" value="1"/>
</dbReference>
<dbReference type="FunFam" id="1.20.1420.10:FF:000025">
    <property type="match status" value="1"/>
</dbReference>
<dbReference type="FunFam" id="1.20.1420.10:FF:000017">
    <property type="entry name" value="Talin"/>
    <property type="match status" value="1"/>
</dbReference>
<dbReference type="FunFam" id="1.20.80.10:FF:000007">
    <property type="entry name" value="Talin 2"/>
    <property type="match status" value="1"/>
</dbReference>
<dbReference type="FunFam" id="2.30.29.30:FF:000028">
    <property type="entry name" value="Talin 2"/>
    <property type="match status" value="1"/>
</dbReference>
<dbReference type="Gene3D" id="1.20.80.10">
    <property type="match status" value="1"/>
</dbReference>
<dbReference type="Gene3D" id="1.20.120.230">
    <property type="entry name" value="Alpha-catenin/vinculin-like"/>
    <property type="match status" value="2"/>
</dbReference>
<dbReference type="Gene3D" id="1.20.1410.10">
    <property type="entry name" value="I/LWEQ domain"/>
    <property type="match status" value="1"/>
</dbReference>
<dbReference type="Gene3D" id="3.10.20.90">
    <property type="entry name" value="Phosphatidylinositol 3-kinase Catalytic Subunit, Chain A, domain 1"/>
    <property type="match status" value="2"/>
</dbReference>
<dbReference type="Gene3D" id="2.30.29.30">
    <property type="entry name" value="Pleckstrin-homology domain (PH domain)/Phosphotyrosine-binding domain (PTB)"/>
    <property type="match status" value="1"/>
</dbReference>
<dbReference type="Gene3D" id="1.20.1420.10">
    <property type="entry name" value="Talin, central domain"/>
    <property type="match status" value="6"/>
</dbReference>
<dbReference type="InterPro" id="IPR036723">
    <property type="entry name" value="Alpha-catenin/vinculin-like_sf"/>
</dbReference>
<dbReference type="InterPro" id="IPR019749">
    <property type="entry name" value="Band_41_domain"/>
</dbReference>
<dbReference type="InterPro" id="IPR014352">
    <property type="entry name" value="FERM/acyl-CoA-bd_prot_sf"/>
</dbReference>
<dbReference type="InterPro" id="IPR035963">
    <property type="entry name" value="FERM_2"/>
</dbReference>
<dbReference type="InterPro" id="IPR019748">
    <property type="entry name" value="FERM_central"/>
</dbReference>
<dbReference type="InterPro" id="IPR019747">
    <property type="entry name" value="FERM_CS"/>
</dbReference>
<dbReference type="InterPro" id="IPR000299">
    <property type="entry name" value="FERM_domain"/>
</dbReference>
<dbReference type="InterPro" id="IPR032425">
    <property type="entry name" value="FERM_f0"/>
</dbReference>
<dbReference type="InterPro" id="IPR035964">
    <property type="entry name" value="I/LWEQ_dom_sf"/>
</dbReference>
<dbReference type="InterPro" id="IPR002558">
    <property type="entry name" value="ILWEQ_dom"/>
</dbReference>
<dbReference type="InterPro" id="IPR002404">
    <property type="entry name" value="IRS_PTB"/>
</dbReference>
<dbReference type="InterPro" id="IPR011993">
    <property type="entry name" value="PH-like_dom_sf"/>
</dbReference>
<dbReference type="InterPro" id="IPR049108">
    <property type="entry name" value="Talin_R4"/>
</dbReference>
<dbReference type="InterPro" id="IPR054060">
    <property type="entry name" value="TLN1-like_RS"/>
</dbReference>
<dbReference type="InterPro" id="IPR029071">
    <property type="entry name" value="Ubiquitin-like_domsf"/>
</dbReference>
<dbReference type="PANTHER" id="PTHR19981:SF1">
    <property type="entry name" value="RHEA, ISOFORM B"/>
    <property type="match status" value="1"/>
</dbReference>
<dbReference type="PANTHER" id="PTHR19981">
    <property type="entry name" value="TALIN"/>
    <property type="match status" value="1"/>
</dbReference>
<dbReference type="Pfam" id="PF16511">
    <property type="entry name" value="FERM_f0"/>
    <property type="match status" value="1"/>
</dbReference>
<dbReference type="Pfam" id="PF00373">
    <property type="entry name" value="FERM_M"/>
    <property type="match status" value="1"/>
</dbReference>
<dbReference type="Pfam" id="PF01608">
    <property type="entry name" value="I_LWEQ"/>
    <property type="match status" value="1"/>
</dbReference>
<dbReference type="Pfam" id="PF02174">
    <property type="entry name" value="IRS"/>
    <property type="match status" value="1"/>
</dbReference>
<dbReference type="Pfam" id="PF21692">
    <property type="entry name" value="Talin_R4"/>
    <property type="match status" value="1"/>
</dbReference>
<dbReference type="Pfam" id="PF21865">
    <property type="entry name" value="TLN1-like_RS"/>
    <property type="match status" value="2"/>
</dbReference>
<dbReference type="SMART" id="SM00295">
    <property type="entry name" value="B41"/>
    <property type="match status" value="1"/>
</dbReference>
<dbReference type="SMART" id="SM00307">
    <property type="entry name" value="ILWEQ"/>
    <property type="match status" value="1"/>
</dbReference>
<dbReference type="SMART" id="SM01244">
    <property type="entry name" value="IRS"/>
    <property type="match status" value="1"/>
</dbReference>
<dbReference type="SUPFAM" id="SSF47220">
    <property type="entry name" value="alpha-catenin/vinculin-like"/>
    <property type="match status" value="4"/>
</dbReference>
<dbReference type="SUPFAM" id="SSF109885">
    <property type="entry name" value="I/LWEQ domain"/>
    <property type="match status" value="1"/>
</dbReference>
<dbReference type="SUPFAM" id="SSF50729">
    <property type="entry name" value="PH domain-like"/>
    <property type="match status" value="1"/>
</dbReference>
<dbReference type="SUPFAM" id="SSF47031">
    <property type="entry name" value="Second domain of FERM"/>
    <property type="match status" value="1"/>
</dbReference>
<dbReference type="SUPFAM" id="SSF54236">
    <property type="entry name" value="Ubiquitin-like"/>
    <property type="match status" value="1"/>
</dbReference>
<dbReference type="PROSITE" id="PS00660">
    <property type="entry name" value="FERM_1"/>
    <property type="match status" value="1"/>
</dbReference>
<dbReference type="PROSITE" id="PS00661">
    <property type="entry name" value="FERM_2"/>
    <property type="match status" value="1"/>
</dbReference>
<dbReference type="PROSITE" id="PS50057">
    <property type="entry name" value="FERM_3"/>
    <property type="match status" value="1"/>
</dbReference>
<dbReference type="PROSITE" id="PS50945">
    <property type="entry name" value="I_LWEQ"/>
    <property type="match status" value="1"/>
</dbReference>
<gene>
    <name type="primary">talA</name>
</gene>
<feature type="chain" id="PRO_0000393276" description="Talin-A">
    <location>
        <begin position="1"/>
        <end position="2492"/>
    </location>
</feature>
<feature type="domain" description="FERM" evidence="1">
    <location>
        <begin position="84"/>
        <end position="365"/>
    </location>
</feature>
<feature type="domain" description="I/LWEQ" evidence="2">
    <location>
        <begin position="2250"/>
        <end position="2492"/>
    </location>
</feature>
<accession>P0CE95</accession>
<accession>P54633</accession>
<accession>Q54FX1</accession>